<keyword id="KW-0963">Cytoplasm</keyword>
<keyword id="KW-0520">NAD</keyword>
<keyword id="KW-0560">Oxidoreductase</keyword>
<keyword id="KW-0664">Pyridoxine biosynthesis</keyword>
<gene>
    <name evidence="1" type="primary">epd</name>
    <name type="ordered locus">MADE_1004350</name>
</gene>
<dbReference type="EC" id="1.2.1.72" evidence="1"/>
<dbReference type="EMBL" id="CP001103">
    <property type="protein sequence ID" value="AEA97018.1"/>
    <property type="molecule type" value="Genomic_DNA"/>
</dbReference>
<dbReference type="RefSeq" id="WP_012517372.1">
    <property type="nucleotide sequence ID" value="NC_011138.3"/>
</dbReference>
<dbReference type="SMR" id="B4RWC5"/>
<dbReference type="KEGG" id="amc:MADE_1004350"/>
<dbReference type="HOGENOM" id="CLU_030140_0_0_6"/>
<dbReference type="UniPathway" id="UPA00244">
    <property type="reaction ID" value="UER00309"/>
</dbReference>
<dbReference type="Proteomes" id="UP000001870">
    <property type="component" value="Chromosome"/>
</dbReference>
<dbReference type="GO" id="GO:0005737">
    <property type="term" value="C:cytoplasm"/>
    <property type="evidence" value="ECO:0007669"/>
    <property type="project" value="UniProtKB-SubCell"/>
</dbReference>
<dbReference type="GO" id="GO:0048001">
    <property type="term" value="F:erythrose-4-phosphate dehydrogenase activity"/>
    <property type="evidence" value="ECO:0007669"/>
    <property type="project" value="UniProtKB-UniRule"/>
</dbReference>
<dbReference type="GO" id="GO:0051287">
    <property type="term" value="F:NAD binding"/>
    <property type="evidence" value="ECO:0007669"/>
    <property type="project" value="InterPro"/>
</dbReference>
<dbReference type="GO" id="GO:0042823">
    <property type="term" value="P:pyridoxal phosphate biosynthetic process"/>
    <property type="evidence" value="ECO:0007669"/>
    <property type="project" value="UniProtKB-UniRule"/>
</dbReference>
<dbReference type="GO" id="GO:0008615">
    <property type="term" value="P:pyridoxine biosynthetic process"/>
    <property type="evidence" value="ECO:0007669"/>
    <property type="project" value="UniProtKB-UniRule"/>
</dbReference>
<dbReference type="CDD" id="cd23937">
    <property type="entry name" value="GAPDH_C_E4PDH"/>
    <property type="match status" value="1"/>
</dbReference>
<dbReference type="CDD" id="cd17892">
    <property type="entry name" value="GAPDH_N_E4PDH"/>
    <property type="match status" value="1"/>
</dbReference>
<dbReference type="FunFam" id="3.30.360.10:FF:000007">
    <property type="entry name" value="D-erythrose-4-phosphate dehydrogenase"/>
    <property type="match status" value="1"/>
</dbReference>
<dbReference type="FunFam" id="3.40.50.720:FF:000001">
    <property type="entry name" value="Glyceraldehyde-3-phosphate dehydrogenase"/>
    <property type="match status" value="1"/>
</dbReference>
<dbReference type="Gene3D" id="3.30.360.10">
    <property type="entry name" value="Dihydrodipicolinate Reductase, domain 2"/>
    <property type="match status" value="1"/>
</dbReference>
<dbReference type="Gene3D" id="3.40.50.720">
    <property type="entry name" value="NAD(P)-binding Rossmann-like Domain"/>
    <property type="match status" value="1"/>
</dbReference>
<dbReference type="HAMAP" id="MF_01640">
    <property type="entry name" value="E4P_dehydrog"/>
    <property type="match status" value="1"/>
</dbReference>
<dbReference type="InterPro" id="IPR006422">
    <property type="entry name" value="E4P_DH_bac"/>
</dbReference>
<dbReference type="InterPro" id="IPR020831">
    <property type="entry name" value="GlycerAld/Erythrose_P_DH"/>
</dbReference>
<dbReference type="InterPro" id="IPR020829">
    <property type="entry name" value="GlycerAld_3-P_DH_cat"/>
</dbReference>
<dbReference type="InterPro" id="IPR020828">
    <property type="entry name" value="GlycerAld_3-P_DH_NAD(P)-bd"/>
</dbReference>
<dbReference type="InterPro" id="IPR036291">
    <property type="entry name" value="NAD(P)-bd_dom_sf"/>
</dbReference>
<dbReference type="NCBIfam" id="TIGR01532">
    <property type="entry name" value="E4PD_g-proteo"/>
    <property type="match status" value="1"/>
</dbReference>
<dbReference type="NCBIfam" id="NF010058">
    <property type="entry name" value="PRK13535.1"/>
    <property type="match status" value="1"/>
</dbReference>
<dbReference type="PANTHER" id="PTHR43148">
    <property type="entry name" value="GLYCERALDEHYDE-3-PHOSPHATE DEHYDROGENASE 2"/>
    <property type="match status" value="1"/>
</dbReference>
<dbReference type="Pfam" id="PF02800">
    <property type="entry name" value="Gp_dh_C"/>
    <property type="match status" value="1"/>
</dbReference>
<dbReference type="Pfam" id="PF00044">
    <property type="entry name" value="Gp_dh_N"/>
    <property type="match status" value="1"/>
</dbReference>
<dbReference type="PIRSF" id="PIRSF000149">
    <property type="entry name" value="GAP_DH"/>
    <property type="match status" value="1"/>
</dbReference>
<dbReference type="PRINTS" id="PR00078">
    <property type="entry name" value="G3PDHDRGNASE"/>
</dbReference>
<dbReference type="SMART" id="SM00846">
    <property type="entry name" value="Gp_dh_N"/>
    <property type="match status" value="1"/>
</dbReference>
<dbReference type="SUPFAM" id="SSF55347">
    <property type="entry name" value="Glyceraldehyde-3-phosphate dehydrogenase-like, C-terminal domain"/>
    <property type="match status" value="1"/>
</dbReference>
<dbReference type="SUPFAM" id="SSF51735">
    <property type="entry name" value="NAD(P)-binding Rossmann-fold domains"/>
    <property type="match status" value="1"/>
</dbReference>
<sequence length="336" mass="36627">MVNIAINGFGRIGRNVLRALYESGRNNEFNVVAINDIAKPEGIAHLLKYDTAHGRFRFDVALENNTLNVAGDDIALLAISDIKELPWRDLGVDIVLECTGKFDDRASGQAHLDAGAGKVLFSSPGSPDLDNTVIFGTNEDTLTSEQKLVSNGSCTTNCIVPVIQALDAAFGVESGTITTIHASMHDQQVIDAYHEDLRRTRAASQSIIPVDTRLAAGIERILPKFAGKFEAIAVRVPTINVTAMDLSVTLQSKVTIEQVNQALRSAKAGRLQGILDYTEEPLVSVDFNHDPHSCIVDGTQTRVSHKQLVKTLVWCDNEWGFANRMLDTAKVMFDAK</sequence>
<comment type="function">
    <text evidence="1">Catalyzes the NAD-dependent conversion of D-erythrose 4-phosphate to 4-phosphoerythronate.</text>
</comment>
<comment type="catalytic activity">
    <reaction evidence="1">
        <text>D-erythrose 4-phosphate + NAD(+) + H2O = 4-phospho-D-erythronate + NADH + 2 H(+)</text>
        <dbReference type="Rhea" id="RHEA:12056"/>
        <dbReference type="ChEBI" id="CHEBI:15377"/>
        <dbReference type="ChEBI" id="CHEBI:15378"/>
        <dbReference type="ChEBI" id="CHEBI:16897"/>
        <dbReference type="ChEBI" id="CHEBI:57540"/>
        <dbReference type="ChEBI" id="CHEBI:57945"/>
        <dbReference type="ChEBI" id="CHEBI:58766"/>
        <dbReference type="EC" id="1.2.1.72"/>
    </reaction>
</comment>
<comment type="pathway">
    <text evidence="1">Cofactor biosynthesis; pyridoxine 5'-phosphate biosynthesis; pyridoxine 5'-phosphate from D-erythrose 4-phosphate: step 1/5.</text>
</comment>
<comment type="subunit">
    <text evidence="1">Homotetramer.</text>
</comment>
<comment type="subcellular location">
    <subcellularLocation>
        <location evidence="1">Cytoplasm</location>
    </subcellularLocation>
</comment>
<comment type="similarity">
    <text evidence="1">Belongs to the glyceraldehyde-3-phosphate dehydrogenase family. Epd subfamily.</text>
</comment>
<protein>
    <recommendedName>
        <fullName evidence="1">D-erythrose-4-phosphate dehydrogenase</fullName>
        <shortName evidence="1">E4PDH</shortName>
        <ecNumber evidence="1">1.2.1.72</ecNumber>
    </recommendedName>
</protein>
<proteinExistence type="inferred from homology"/>
<organism>
    <name type="scientific">Alteromonas mediterranea (strain DSM 17117 / CIP 110805 / LMG 28347 / Deep ecotype)</name>
    <dbReference type="NCBI Taxonomy" id="1774373"/>
    <lineage>
        <taxon>Bacteria</taxon>
        <taxon>Pseudomonadati</taxon>
        <taxon>Pseudomonadota</taxon>
        <taxon>Gammaproteobacteria</taxon>
        <taxon>Alteromonadales</taxon>
        <taxon>Alteromonadaceae</taxon>
        <taxon>Alteromonas/Salinimonas group</taxon>
        <taxon>Alteromonas</taxon>
    </lineage>
</organism>
<accession>B4RWC5</accession>
<accession>F2GAX7</accession>
<evidence type="ECO:0000255" key="1">
    <source>
        <dbReference type="HAMAP-Rule" id="MF_01640"/>
    </source>
</evidence>
<feature type="chain" id="PRO_1000186816" description="D-erythrose-4-phosphate dehydrogenase">
    <location>
        <begin position="1"/>
        <end position="336"/>
    </location>
</feature>
<feature type="active site" description="Nucleophile" evidence="1">
    <location>
        <position position="154"/>
    </location>
</feature>
<feature type="binding site" evidence="1">
    <location>
        <begin position="11"/>
        <end position="12"/>
    </location>
    <ligand>
        <name>NAD(+)</name>
        <dbReference type="ChEBI" id="CHEBI:57540"/>
    </ligand>
</feature>
<feature type="binding site" evidence="1">
    <location>
        <begin position="153"/>
        <end position="155"/>
    </location>
    <ligand>
        <name>substrate</name>
    </ligand>
</feature>
<feature type="binding site" evidence="1">
    <location>
        <position position="199"/>
    </location>
    <ligand>
        <name>substrate</name>
    </ligand>
</feature>
<feature type="binding site" evidence="1">
    <location>
        <begin position="212"/>
        <end position="213"/>
    </location>
    <ligand>
        <name>substrate</name>
    </ligand>
</feature>
<feature type="binding site" evidence="1">
    <location>
        <position position="235"/>
    </location>
    <ligand>
        <name>substrate</name>
    </ligand>
</feature>
<feature type="binding site" evidence="1">
    <location>
        <position position="317"/>
    </location>
    <ligand>
        <name>NAD(+)</name>
        <dbReference type="ChEBI" id="CHEBI:57540"/>
    </ligand>
</feature>
<feature type="site" description="Activates thiol group during catalysis" evidence="1">
    <location>
        <position position="181"/>
    </location>
</feature>
<reference key="1">
    <citation type="journal article" date="2008" name="ISME J.">
        <title>Comparative genomics of two ecotypes of the marine planktonic copiotroph Alteromonas macleodii suggests alternative lifestyles associated with different kinds of particulate organic matter.</title>
        <authorList>
            <person name="Ivars-Martinez E."/>
            <person name="Martin-Cuadrado A.-B."/>
            <person name="D'Auria G."/>
            <person name="Mira A."/>
            <person name="Ferriera S."/>
            <person name="Johnson J."/>
            <person name="Friedman R."/>
            <person name="Rodriguez-Valera F."/>
        </authorList>
    </citation>
    <scope>NUCLEOTIDE SEQUENCE [LARGE SCALE GENOMIC DNA]</scope>
    <source>
        <strain>DSM 17117 / CIP 110805 / LMG 28347 / Deep ecotype</strain>
    </source>
</reference>
<name>E4PD_ALTMD</name>